<feature type="chain" id="PRO_0000126040" description="Small heat shock protein ibp">
    <location>
        <begin position="1"/>
        <end position="157"/>
    </location>
</feature>
<feature type="domain" description="sHSP" evidence="1">
    <location>
        <begin position="35"/>
        <end position="148"/>
    </location>
</feature>
<gene>
    <name type="primary">ibp</name>
    <name type="ordered locus">BU580</name>
</gene>
<accession>P57640</accession>
<sequence length="157" mass="18239">MSYRSLSFIPNFNDHNVFSNRFNQIDKMFSTLTGEKPISDTPTYNLCQINEIEYQLTLSIPGYQEKELDISVHNNQLSIQGKKENSDTQECNKWLHKGIVFNNFSLNFNLDHKIKVKKAELSLGLLKLDFECNIPEEEKPKKISINVPNDTKKIDKK</sequence>
<evidence type="ECO:0000255" key="1">
    <source>
        <dbReference type="PROSITE-ProRule" id="PRU00285"/>
    </source>
</evidence>
<keyword id="KW-1185">Reference proteome</keyword>
<keyword id="KW-0346">Stress response</keyword>
<protein>
    <recommendedName>
        <fullName>Small heat shock protein ibp</fullName>
    </recommendedName>
</protein>
<dbReference type="EMBL" id="BA000003">
    <property type="protein sequence ID" value="BAB13269.1"/>
    <property type="molecule type" value="Genomic_DNA"/>
</dbReference>
<dbReference type="RefSeq" id="NP_240383.1">
    <property type="nucleotide sequence ID" value="NC_002528.1"/>
</dbReference>
<dbReference type="RefSeq" id="WP_009874530.1">
    <property type="nucleotide sequence ID" value="NZ_AP036055.1"/>
</dbReference>
<dbReference type="SMR" id="P57640"/>
<dbReference type="STRING" id="563178.BUAP5A_573"/>
<dbReference type="EnsemblBacteria" id="BAB13269">
    <property type="protein sequence ID" value="BAB13269"/>
    <property type="gene ID" value="BAB13269"/>
</dbReference>
<dbReference type="KEGG" id="buc:BU580"/>
<dbReference type="PATRIC" id="fig|107806.10.peg.585"/>
<dbReference type="eggNOG" id="COG0071">
    <property type="taxonomic scope" value="Bacteria"/>
</dbReference>
<dbReference type="HOGENOM" id="CLU_046737_4_2_6"/>
<dbReference type="Proteomes" id="UP000001806">
    <property type="component" value="Chromosome"/>
</dbReference>
<dbReference type="CDD" id="cd06470">
    <property type="entry name" value="ACD_IbpA-B_like"/>
    <property type="match status" value="1"/>
</dbReference>
<dbReference type="Gene3D" id="2.60.40.790">
    <property type="match status" value="1"/>
</dbReference>
<dbReference type="InterPro" id="IPR002068">
    <property type="entry name" value="A-crystallin/Hsp20_dom"/>
</dbReference>
<dbReference type="InterPro" id="IPR037913">
    <property type="entry name" value="ACD_IbpA/B"/>
</dbReference>
<dbReference type="InterPro" id="IPR008978">
    <property type="entry name" value="HSP20-like_chaperone"/>
</dbReference>
<dbReference type="PANTHER" id="PTHR47062">
    <property type="match status" value="1"/>
</dbReference>
<dbReference type="PANTHER" id="PTHR47062:SF1">
    <property type="entry name" value="SMALL HEAT SHOCK PROTEIN IBPA"/>
    <property type="match status" value="1"/>
</dbReference>
<dbReference type="Pfam" id="PF00011">
    <property type="entry name" value="HSP20"/>
    <property type="match status" value="1"/>
</dbReference>
<dbReference type="SUPFAM" id="SSF49764">
    <property type="entry name" value="HSP20-like chaperones"/>
    <property type="match status" value="1"/>
</dbReference>
<dbReference type="PROSITE" id="PS01031">
    <property type="entry name" value="SHSP"/>
    <property type="match status" value="1"/>
</dbReference>
<organism>
    <name type="scientific">Buchnera aphidicola subsp. Acyrthosiphon pisum (strain APS)</name>
    <name type="common">Acyrthosiphon pisum symbiotic bacterium</name>
    <dbReference type="NCBI Taxonomy" id="107806"/>
    <lineage>
        <taxon>Bacteria</taxon>
        <taxon>Pseudomonadati</taxon>
        <taxon>Pseudomonadota</taxon>
        <taxon>Gammaproteobacteria</taxon>
        <taxon>Enterobacterales</taxon>
        <taxon>Erwiniaceae</taxon>
        <taxon>Buchnera</taxon>
    </lineage>
</organism>
<reference key="1">
    <citation type="journal article" date="2000" name="Nature">
        <title>Genome sequence of the endocellular bacterial symbiont of aphids Buchnera sp. APS.</title>
        <authorList>
            <person name="Shigenobu S."/>
            <person name="Watanabe H."/>
            <person name="Hattori M."/>
            <person name="Sakaki Y."/>
            <person name="Ishikawa H."/>
        </authorList>
    </citation>
    <scope>NUCLEOTIDE SEQUENCE [LARGE SCALE GENOMIC DNA]</scope>
    <source>
        <strain>APS</strain>
    </source>
</reference>
<proteinExistence type="inferred from homology"/>
<name>IBP_BUCAI</name>
<comment type="similarity">
    <text evidence="1">Belongs to the small heat shock protein (HSP20) family.</text>
</comment>